<organism>
    <name type="scientific">Haemophilus influenzae (strain PittEE)</name>
    <dbReference type="NCBI Taxonomy" id="374930"/>
    <lineage>
        <taxon>Bacteria</taxon>
        <taxon>Pseudomonadati</taxon>
        <taxon>Pseudomonadota</taxon>
        <taxon>Gammaproteobacteria</taxon>
        <taxon>Pasteurellales</taxon>
        <taxon>Pasteurellaceae</taxon>
        <taxon>Haemophilus</taxon>
    </lineage>
</organism>
<keyword id="KW-0119">Carbohydrate metabolism</keyword>
<keyword id="KW-0963">Cytoplasm</keyword>
<keyword id="KW-0413">Isomerase</keyword>
<keyword id="KW-0460">Magnesium</keyword>
<keyword id="KW-0479">Metal-binding</keyword>
<keyword id="KW-0859">Xylose metabolism</keyword>
<accession>A5UCZ3</accession>
<comment type="catalytic activity">
    <reaction evidence="1">
        <text>alpha-D-xylose = alpha-D-xylulofuranose</text>
        <dbReference type="Rhea" id="RHEA:22816"/>
        <dbReference type="ChEBI" id="CHEBI:28518"/>
        <dbReference type="ChEBI" id="CHEBI:188998"/>
        <dbReference type="EC" id="5.3.1.5"/>
    </reaction>
</comment>
<comment type="cofactor">
    <cofactor evidence="1">
        <name>Mg(2+)</name>
        <dbReference type="ChEBI" id="CHEBI:18420"/>
    </cofactor>
    <text evidence="1">Binds 2 magnesium ions per subunit.</text>
</comment>
<comment type="subunit">
    <text evidence="1">Homotetramer.</text>
</comment>
<comment type="subcellular location">
    <subcellularLocation>
        <location evidence="1">Cytoplasm</location>
    </subcellularLocation>
</comment>
<comment type="similarity">
    <text evidence="1">Belongs to the xylose isomerase family.</text>
</comment>
<sequence length="439" mass="49896">MTTYFDKIEKISFEGEKSTNPFAFKHYDANQVILGKTMAEHLRLAVCYWHTFCWNGNDMFGLGSLERSWQKNSNLLAGAEQKADIAFEFLNKLGVPYYCFHDVDIAPEGNSVREYVQNFHHIVDILERKQVETGVKLLWGTANCFTNPRYMSGAATNPNPEVFAWAATQVFNAMNATQRLGGENYVLWGGREGYETLLNTDLKREREQIGRFMQMVVEHKHKIGFKGTLLIEPKPQEPTKHQYDYDVATVYGFLKQFGLEKEIKVNIEANHATLAGHTFQHEIATACALDIFGSIDANRGDPQLGWDTDQFPNSVEENTLVMYEILKHGGFTTGGFNFDAKIRRQSIDPYDLFYAHIGAIDVLALSLKRAAKMLQEETLQKIVNERYAGWNSELGQHILQGKTSLETLAQLVQQKDLAPKPVSGQQEYLENLVNQVIYS</sequence>
<gene>
    <name evidence="1" type="primary">xylA</name>
    <name type="ordered locus">CGSHiEE_06495</name>
</gene>
<evidence type="ECO:0000255" key="1">
    <source>
        <dbReference type="HAMAP-Rule" id="MF_00455"/>
    </source>
</evidence>
<proteinExistence type="inferred from homology"/>
<dbReference type="EC" id="5.3.1.5" evidence="1"/>
<dbReference type="EMBL" id="CP000671">
    <property type="protein sequence ID" value="ABQ98644.1"/>
    <property type="molecule type" value="Genomic_DNA"/>
</dbReference>
<dbReference type="SMR" id="A5UCZ3"/>
<dbReference type="KEGG" id="hip:CGSHiEE_06495"/>
<dbReference type="HOGENOM" id="CLU_037261_1_0_6"/>
<dbReference type="GO" id="GO:0005737">
    <property type="term" value="C:cytoplasm"/>
    <property type="evidence" value="ECO:0007669"/>
    <property type="project" value="UniProtKB-SubCell"/>
</dbReference>
<dbReference type="GO" id="GO:0000287">
    <property type="term" value="F:magnesium ion binding"/>
    <property type="evidence" value="ECO:0007669"/>
    <property type="project" value="UniProtKB-UniRule"/>
</dbReference>
<dbReference type="GO" id="GO:0009045">
    <property type="term" value="F:xylose isomerase activity"/>
    <property type="evidence" value="ECO:0007669"/>
    <property type="project" value="UniProtKB-UniRule"/>
</dbReference>
<dbReference type="GO" id="GO:0042732">
    <property type="term" value="P:D-xylose metabolic process"/>
    <property type="evidence" value="ECO:0007669"/>
    <property type="project" value="UniProtKB-UniRule"/>
</dbReference>
<dbReference type="FunFam" id="3.20.20.150:FF:000002">
    <property type="entry name" value="Xylose isomerase"/>
    <property type="match status" value="1"/>
</dbReference>
<dbReference type="Gene3D" id="3.20.20.150">
    <property type="entry name" value="Divalent-metal-dependent TIM barrel enzymes"/>
    <property type="match status" value="1"/>
</dbReference>
<dbReference type="HAMAP" id="MF_00455">
    <property type="entry name" value="Xylose_isom_A"/>
    <property type="match status" value="1"/>
</dbReference>
<dbReference type="InterPro" id="IPR036237">
    <property type="entry name" value="Xyl_isomerase-like_sf"/>
</dbReference>
<dbReference type="InterPro" id="IPR013452">
    <property type="entry name" value="Xylose_isom_bac"/>
</dbReference>
<dbReference type="InterPro" id="IPR001998">
    <property type="entry name" value="Xylose_isomerase"/>
</dbReference>
<dbReference type="NCBIfam" id="NF003998">
    <property type="entry name" value="PRK05474.1"/>
    <property type="match status" value="1"/>
</dbReference>
<dbReference type="NCBIfam" id="TIGR02630">
    <property type="entry name" value="xylose_isom_A"/>
    <property type="match status" value="1"/>
</dbReference>
<dbReference type="PANTHER" id="PTHR48408">
    <property type="match status" value="1"/>
</dbReference>
<dbReference type="PANTHER" id="PTHR48408:SF1">
    <property type="entry name" value="XYLOSE ISOMERASE"/>
    <property type="match status" value="1"/>
</dbReference>
<dbReference type="PRINTS" id="PR00688">
    <property type="entry name" value="XYLOSISMRASE"/>
</dbReference>
<dbReference type="SUPFAM" id="SSF51658">
    <property type="entry name" value="Xylose isomerase-like"/>
    <property type="match status" value="1"/>
</dbReference>
<dbReference type="PROSITE" id="PS51415">
    <property type="entry name" value="XYLOSE_ISOMERASE"/>
    <property type="match status" value="1"/>
</dbReference>
<protein>
    <recommendedName>
        <fullName evidence="1">Xylose isomerase</fullName>
        <ecNumber evidence="1">5.3.1.5</ecNumber>
    </recommendedName>
</protein>
<feature type="chain" id="PRO_1000026442" description="Xylose isomerase">
    <location>
        <begin position="1"/>
        <end position="439"/>
    </location>
</feature>
<feature type="active site" evidence="1">
    <location>
        <position position="101"/>
    </location>
</feature>
<feature type="active site" evidence="1">
    <location>
        <position position="104"/>
    </location>
</feature>
<feature type="binding site" evidence="1">
    <location>
        <position position="232"/>
    </location>
    <ligand>
        <name>Mg(2+)</name>
        <dbReference type="ChEBI" id="CHEBI:18420"/>
        <label>1</label>
    </ligand>
</feature>
<feature type="binding site" evidence="1">
    <location>
        <position position="268"/>
    </location>
    <ligand>
        <name>Mg(2+)</name>
        <dbReference type="ChEBI" id="CHEBI:18420"/>
        <label>1</label>
    </ligand>
</feature>
<feature type="binding site" evidence="1">
    <location>
        <position position="268"/>
    </location>
    <ligand>
        <name>Mg(2+)</name>
        <dbReference type="ChEBI" id="CHEBI:18420"/>
        <label>2</label>
    </ligand>
</feature>
<feature type="binding site" evidence="1">
    <location>
        <position position="271"/>
    </location>
    <ligand>
        <name>Mg(2+)</name>
        <dbReference type="ChEBI" id="CHEBI:18420"/>
        <label>2</label>
    </ligand>
</feature>
<feature type="binding site" evidence="1">
    <location>
        <position position="296"/>
    </location>
    <ligand>
        <name>Mg(2+)</name>
        <dbReference type="ChEBI" id="CHEBI:18420"/>
        <label>1</label>
    </ligand>
</feature>
<feature type="binding site" evidence="1">
    <location>
        <position position="307"/>
    </location>
    <ligand>
        <name>Mg(2+)</name>
        <dbReference type="ChEBI" id="CHEBI:18420"/>
        <label>2</label>
    </ligand>
</feature>
<feature type="binding site" evidence="1">
    <location>
        <position position="309"/>
    </location>
    <ligand>
        <name>Mg(2+)</name>
        <dbReference type="ChEBI" id="CHEBI:18420"/>
        <label>2</label>
    </ligand>
</feature>
<feature type="binding site" evidence="1">
    <location>
        <position position="339"/>
    </location>
    <ligand>
        <name>Mg(2+)</name>
        <dbReference type="ChEBI" id="CHEBI:18420"/>
        <label>1</label>
    </ligand>
</feature>
<reference key="1">
    <citation type="journal article" date="2007" name="Genome Biol.">
        <title>Characterization and modeling of the Haemophilus influenzae core and supragenomes based on the complete genomic sequences of Rd and 12 clinical nontypeable strains.</title>
        <authorList>
            <person name="Hogg J.S."/>
            <person name="Hu F.Z."/>
            <person name="Janto B."/>
            <person name="Boissy R."/>
            <person name="Hayes J."/>
            <person name="Keefe R."/>
            <person name="Post J.C."/>
            <person name="Ehrlich G.D."/>
        </authorList>
    </citation>
    <scope>NUCLEOTIDE SEQUENCE [LARGE SCALE GENOMIC DNA]</scope>
    <source>
        <strain>PittEE</strain>
    </source>
</reference>
<name>XYLA_HAEIE</name>